<sequence length="75" mass="8380">MSSGGLLLLLGLLTLWAELTPVSGQDRPVKPGLCPPRPQKPPCVKECKNDWSCRGEQKCCRYGCIYECRDPIFVK</sequence>
<reference key="1">
    <citation type="journal article" date="2008" name="Cell. Mol. Life Sci.">
        <title>Common evolution of waprin and Kunitz-like toxin families in Australian venomous snakes.</title>
        <authorList>
            <person name="St Pierre L."/>
            <person name="Earl S.T."/>
            <person name="Filippovich I."/>
            <person name="Sorokina N."/>
            <person name="Masci P.P."/>
            <person name="De Jersey J."/>
            <person name="Lavin M.F."/>
        </authorList>
    </citation>
    <scope>NUCLEOTIDE SEQUENCE [GENOMIC DNA]</scope>
    <source>
        <tissue>Venom gland</tissue>
    </source>
</reference>
<accession>B5L5P7</accession>
<feature type="signal peptide" evidence="2">
    <location>
        <begin position="1"/>
        <end position="24"/>
    </location>
</feature>
<feature type="chain" id="PRO_5000395635" description="Veswaprin-d">
    <location>
        <begin position="25"/>
        <end position="75"/>
    </location>
</feature>
<feature type="domain" description="WAP" evidence="3">
    <location>
        <begin position="27"/>
        <end position="72"/>
    </location>
</feature>
<feature type="disulfide bond" evidence="3">
    <location>
        <begin position="34"/>
        <end position="60"/>
    </location>
</feature>
<feature type="disulfide bond" evidence="3">
    <location>
        <begin position="43"/>
        <end position="64"/>
    </location>
</feature>
<feature type="disulfide bond" evidence="3">
    <location>
        <begin position="47"/>
        <end position="59"/>
    </location>
</feature>
<feature type="disulfide bond" evidence="3">
    <location>
        <begin position="53"/>
        <end position="68"/>
    </location>
</feature>
<keyword id="KW-0044">Antibiotic</keyword>
<keyword id="KW-0929">Antimicrobial</keyword>
<keyword id="KW-1015">Disulfide bond</keyword>
<keyword id="KW-0964">Secreted</keyword>
<keyword id="KW-0732">Signal</keyword>
<comment type="function">
    <text evidence="1">Damages membranes of susceptible bacteria. Has no hemolytic activity. Not toxic to mice. Does not inhibit the proteinases elastase and cathepsin G.</text>
</comment>
<comment type="subcellular location">
    <subcellularLocation>
        <location evidence="6">Secreted</location>
    </subcellularLocation>
</comment>
<comment type="tissue specificity">
    <text evidence="6">Expressed by the venom gland.</text>
</comment>
<comment type="similarity">
    <text evidence="5">Belongs to the venom waprin family.</text>
</comment>
<protein>
    <recommendedName>
        <fullName evidence="4">Veswaprin-d</fullName>
    </recommendedName>
</protein>
<name>WAPD_DEMVE</name>
<dbReference type="EMBL" id="EU401835">
    <property type="protein sequence ID" value="ACC77784.1"/>
    <property type="molecule type" value="Genomic_DNA"/>
</dbReference>
<dbReference type="SMR" id="B5L5P7"/>
<dbReference type="GO" id="GO:0005576">
    <property type="term" value="C:extracellular region"/>
    <property type="evidence" value="ECO:0000250"/>
    <property type="project" value="UniProtKB"/>
</dbReference>
<dbReference type="GO" id="GO:0005615">
    <property type="term" value="C:extracellular space"/>
    <property type="evidence" value="ECO:0007669"/>
    <property type="project" value="TreeGrafter"/>
</dbReference>
<dbReference type="GO" id="GO:0004867">
    <property type="term" value="F:serine-type endopeptidase inhibitor activity"/>
    <property type="evidence" value="ECO:0007669"/>
    <property type="project" value="TreeGrafter"/>
</dbReference>
<dbReference type="GO" id="GO:0019731">
    <property type="term" value="P:antibacterial humoral response"/>
    <property type="evidence" value="ECO:0007669"/>
    <property type="project" value="TreeGrafter"/>
</dbReference>
<dbReference type="GO" id="GO:0045087">
    <property type="term" value="P:innate immune response"/>
    <property type="evidence" value="ECO:0007669"/>
    <property type="project" value="TreeGrafter"/>
</dbReference>
<dbReference type="GO" id="GO:0044278">
    <property type="term" value="P:venom-mediated disruption of cell wall in another organism"/>
    <property type="evidence" value="ECO:0000250"/>
    <property type="project" value="UniProtKB"/>
</dbReference>
<dbReference type="Gene3D" id="4.10.75.10">
    <property type="entry name" value="Elafin-like"/>
    <property type="match status" value="1"/>
</dbReference>
<dbReference type="InterPro" id="IPR036645">
    <property type="entry name" value="Elafin-like_sf"/>
</dbReference>
<dbReference type="InterPro" id="IPR008197">
    <property type="entry name" value="WAP_dom"/>
</dbReference>
<dbReference type="InterPro" id="IPR050514">
    <property type="entry name" value="WAP_four-disulfide_core"/>
</dbReference>
<dbReference type="PANTHER" id="PTHR19441:SF44">
    <property type="entry name" value="ANTILEUKOPROTEINASE"/>
    <property type="match status" value="1"/>
</dbReference>
<dbReference type="PANTHER" id="PTHR19441">
    <property type="entry name" value="WHEY ACDIC PROTEIN WAP"/>
    <property type="match status" value="1"/>
</dbReference>
<dbReference type="Pfam" id="PF00095">
    <property type="entry name" value="WAP"/>
    <property type="match status" value="1"/>
</dbReference>
<dbReference type="PRINTS" id="PR00003">
    <property type="entry name" value="4DISULPHCORE"/>
</dbReference>
<dbReference type="SMART" id="SM00217">
    <property type="entry name" value="WAP"/>
    <property type="match status" value="1"/>
</dbReference>
<dbReference type="SUPFAM" id="SSF57256">
    <property type="entry name" value="Elafin-like"/>
    <property type="match status" value="1"/>
</dbReference>
<dbReference type="PROSITE" id="PS51390">
    <property type="entry name" value="WAP"/>
    <property type="match status" value="1"/>
</dbReference>
<evidence type="ECO:0000250" key="1">
    <source>
        <dbReference type="UniProtKB" id="P83952"/>
    </source>
</evidence>
<evidence type="ECO:0000255" key="2"/>
<evidence type="ECO:0000255" key="3">
    <source>
        <dbReference type="PROSITE-ProRule" id="PRU00722"/>
    </source>
</evidence>
<evidence type="ECO:0000303" key="4">
    <source>
    </source>
</evidence>
<evidence type="ECO:0000305" key="5"/>
<evidence type="ECO:0000305" key="6">
    <source>
    </source>
</evidence>
<organism>
    <name type="scientific">Demansia vestigiata</name>
    <name type="common">Lesser black whip snake</name>
    <name type="synonym">Demansia atra</name>
    <dbReference type="NCBI Taxonomy" id="412038"/>
    <lineage>
        <taxon>Eukaryota</taxon>
        <taxon>Metazoa</taxon>
        <taxon>Chordata</taxon>
        <taxon>Craniata</taxon>
        <taxon>Vertebrata</taxon>
        <taxon>Euteleostomi</taxon>
        <taxon>Lepidosauria</taxon>
        <taxon>Squamata</taxon>
        <taxon>Bifurcata</taxon>
        <taxon>Unidentata</taxon>
        <taxon>Episquamata</taxon>
        <taxon>Toxicofera</taxon>
        <taxon>Serpentes</taxon>
        <taxon>Colubroidea</taxon>
        <taxon>Elapidae</taxon>
        <taxon>Notechinae</taxon>
        <taxon>Demansia</taxon>
    </lineage>
</organism>
<proteinExistence type="inferred from homology"/>